<feature type="chain" id="PRO_1000130840" description="UDP-N-acetylmuramoylalanine--D-glutamate ligase">
    <location>
        <begin position="1"/>
        <end position="416"/>
    </location>
</feature>
<feature type="binding site" evidence="1">
    <location>
        <begin position="108"/>
        <end position="114"/>
    </location>
    <ligand>
        <name>ATP</name>
        <dbReference type="ChEBI" id="CHEBI:30616"/>
    </ligand>
</feature>
<protein>
    <recommendedName>
        <fullName evidence="1">UDP-N-acetylmuramoylalanine--D-glutamate ligase</fullName>
        <ecNumber evidence="1">6.3.2.9</ecNumber>
    </recommendedName>
    <alternativeName>
        <fullName evidence="1">D-glutamic acid-adding enzyme</fullName>
    </alternativeName>
    <alternativeName>
        <fullName evidence="1">UDP-N-acetylmuramoyl-L-alanyl-D-glutamate synthetase</fullName>
    </alternativeName>
</protein>
<reference key="1">
    <citation type="journal article" date="2008" name="Genome Res.">
        <title>Chlamydia trachomatis: genome sequence analysis of lymphogranuloma venereum isolates.</title>
        <authorList>
            <person name="Thomson N.R."/>
            <person name="Holden M.T.G."/>
            <person name="Carder C."/>
            <person name="Lennard N."/>
            <person name="Lockey S.J."/>
            <person name="Marsh P."/>
            <person name="Skipp P."/>
            <person name="O'Connor C.D."/>
            <person name="Goodhead I."/>
            <person name="Norbertzcak H."/>
            <person name="Harris B."/>
            <person name="Ormond D."/>
            <person name="Rance R."/>
            <person name="Quail M.A."/>
            <person name="Parkhill J."/>
            <person name="Stephens R.S."/>
            <person name="Clarke I.N."/>
        </authorList>
    </citation>
    <scope>NUCLEOTIDE SEQUENCE [LARGE SCALE GENOMIC DNA]</scope>
    <source>
        <strain>ATCC VR-902B / DSM 19102 / 434/Bu</strain>
    </source>
</reference>
<sequence length="416" mass="46183">MGLERVVVIGLGVSGRSIARFLAQKGVCVLGVDKSLHALQNCPYIQEKYLENEEFPSQVDYVVRSPGVSKEHPWVQAAIASHIPVMTDIQLAFQTEKFTERESLAITGTTGKTTTILFLEYLFKRSGIPAFAMGNVGIPILDGMQNPGVRIVEISSFQLADQEKSYPVLSGGMILNISDNHLDYHGNFSEYFQAKQNLALCMRNPDDLWVGDERFYGHLYLEEVQKYMRLLDKESALKPLYLHDKYNYCCAYLLAKIEFPISETSFIEAVATFNKPPHRMEYLGQKQGIHYINDSKATTVSATETALLGVGNQAIVILGGRNKGCTFSSLLPALRKAAKSVVAMGECAQEIARDLEEFPVTVVKNLSEALLCAEEQAVPGDVIVLSPACASFDQFRSYEERGAMFKHLVGMEEVLL</sequence>
<comment type="function">
    <text evidence="1">Cell wall formation. Catalyzes the addition of glutamate to the nucleotide precursor UDP-N-acetylmuramoyl-L-alanine (UMA).</text>
</comment>
<comment type="catalytic activity">
    <reaction evidence="1">
        <text>UDP-N-acetyl-alpha-D-muramoyl-L-alanine + D-glutamate + ATP = UDP-N-acetyl-alpha-D-muramoyl-L-alanyl-D-glutamate + ADP + phosphate + H(+)</text>
        <dbReference type="Rhea" id="RHEA:16429"/>
        <dbReference type="ChEBI" id="CHEBI:15378"/>
        <dbReference type="ChEBI" id="CHEBI:29986"/>
        <dbReference type="ChEBI" id="CHEBI:30616"/>
        <dbReference type="ChEBI" id="CHEBI:43474"/>
        <dbReference type="ChEBI" id="CHEBI:83898"/>
        <dbReference type="ChEBI" id="CHEBI:83900"/>
        <dbReference type="ChEBI" id="CHEBI:456216"/>
        <dbReference type="EC" id="6.3.2.9"/>
    </reaction>
</comment>
<comment type="pathway">
    <text evidence="1">Cell wall biogenesis; peptidoglycan biosynthesis.</text>
</comment>
<comment type="subcellular location">
    <subcellularLocation>
        <location evidence="1">Cytoplasm</location>
    </subcellularLocation>
</comment>
<comment type="similarity">
    <text evidence="1">Belongs to the MurCDEF family.</text>
</comment>
<evidence type="ECO:0000255" key="1">
    <source>
        <dbReference type="HAMAP-Rule" id="MF_00639"/>
    </source>
</evidence>
<name>MURD_CHLT2</name>
<dbReference type="EC" id="6.3.2.9" evidence="1"/>
<dbReference type="EMBL" id="AM884176">
    <property type="protein sequence ID" value="CAP03571.1"/>
    <property type="molecule type" value="Genomic_DNA"/>
</dbReference>
<dbReference type="RefSeq" id="WP_009873384.1">
    <property type="nucleotide sequence ID" value="NC_010287.1"/>
</dbReference>
<dbReference type="RefSeq" id="YP_001654218.1">
    <property type="nucleotide sequence ID" value="NC_010287.1"/>
</dbReference>
<dbReference type="SMR" id="B0B8Y4"/>
<dbReference type="KEGG" id="ctb:CTL0127"/>
<dbReference type="PATRIC" id="fig|471472.4.peg.138"/>
<dbReference type="HOGENOM" id="CLU_032540_0_0_0"/>
<dbReference type="UniPathway" id="UPA00219"/>
<dbReference type="Proteomes" id="UP001154402">
    <property type="component" value="Chromosome"/>
</dbReference>
<dbReference type="GO" id="GO:0005737">
    <property type="term" value="C:cytoplasm"/>
    <property type="evidence" value="ECO:0007669"/>
    <property type="project" value="UniProtKB-SubCell"/>
</dbReference>
<dbReference type="GO" id="GO:0005524">
    <property type="term" value="F:ATP binding"/>
    <property type="evidence" value="ECO:0007669"/>
    <property type="project" value="UniProtKB-UniRule"/>
</dbReference>
<dbReference type="GO" id="GO:0008764">
    <property type="term" value="F:UDP-N-acetylmuramoylalanine-D-glutamate ligase activity"/>
    <property type="evidence" value="ECO:0007669"/>
    <property type="project" value="UniProtKB-UniRule"/>
</dbReference>
<dbReference type="GO" id="GO:0051301">
    <property type="term" value="P:cell division"/>
    <property type="evidence" value="ECO:0007669"/>
    <property type="project" value="UniProtKB-KW"/>
</dbReference>
<dbReference type="GO" id="GO:0071555">
    <property type="term" value="P:cell wall organization"/>
    <property type="evidence" value="ECO:0007669"/>
    <property type="project" value="UniProtKB-KW"/>
</dbReference>
<dbReference type="GO" id="GO:0009252">
    <property type="term" value="P:peptidoglycan biosynthetic process"/>
    <property type="evidence" value="ECO:0007669"/>
    <property type="project" value="UniProtKB-UniRule"/>
</dbReference>
<dbReference type="GO" id="GO:0008360">
    <property type="term" value="P:regulation of cell shape"/>
    <property type="evidence" value="ECO:0007669"/>
    <property type="project" value="UniProtKB-KW"/>
</dbReference>
<dbReference type="Gene3D" id="3.90.190.20">
    <property type="entry name" value="Mur ligase, C-terminal domain"/>
    <property type="match status" value="1"/>
</dbReference>
<dbReference type="Gene3D" id="3.40.1190.10">
    <property type="entry name" value="Mur-like, catalytic domain"/>
    <property type="match status" value="1"/>
</dbReference>
<dbReference type="Gene3D" id="3.40.50.720">
    <property type="entry name" value="NAD(P)-binding Rossmann-like Domain"/>
    <property type="match status" value="1"/>
</dbReference>
<dbReference type="HAMAP" id="MF_00639">
    <property type="entry name" value="MurD"/>
    <property type="match status" value="1"/>
</dbReference>
<dbReference type="InterPro" id="IPR036565">
    <property type="entry name" value="Mur-like_cat_sf"/>
</dbReference>
<dbReference type="InterPro" id="IPR004101">
    <property type="entry name" value="Mur_ligase_C"/>
</dbReference>
<dbReference type="InterPro" id="IPR036615">
    <property type="entry name" value="Mur_ligase_C_dom_sf"/>
</dbReference>
<dbReference type="InterPro" id="IPR013221">
    <property type="entry name" value="Mur_ligase_cen"/>
</dbReference>
<dbReference type="InterPro" id="IPR005762">
    <property type="entry name" value="MurD"/>
</dbReference>
<dbReference type="NCBIfam" id="TIGR01087">
    <property type="entry name" value="murD"/>
    <property type="match status" value="1"/>
</dbReference>
<dbReference type="PANTHER" id="PTHR43692">
    <property type="entry name" value="UDP-N-ACETYLMURAMOYLALANINE--D-GLUTAMATE LIGASE"/>
    <property type="match status" value="1"/>
</dbReference>
<dbReference type="PANTHER" id="PTHR43692:SF1">
    <property type="entry name" value="UDP-N-ACETYLMURAMOYLALANINE--D-GLUTAMATE LIGASE"/>
    <property type="match status" value="1"/>
</dbReference>
<dbReference type="Pfam" id="PF02875">
    <property type="entry name" value="Mur_ligase_C"/>
    <property type="match status" value="1"/>
</dbReference>
<dbReference type="Pfam" id="PF08245">
    <property type="entry name" value="Mur_ligase_M"/>
    <property type="match status" value="1"/>
</dbReference>
<dbReference type="Pfam" id="PF21799">
    <property type="entry name" value="MurD-like_N"/>
    <property type="match status" value="1"/>
</dbReference>
<dbReference type="SUPFAM" id="SSF51984">
    <property type="entry name" value="MurCD N-terminal domain"/>
    <property type="match status" value="1"/>
</dbReference>
<dbReference type="SUPFAM" id="SSF53623">
    <property type="entry name" value="MurD-like peptide ligases, catalytic domain"/>
    <property type="match status" value="1"/>
</dbReference>
<dbReference type="SUPFAM" id="SSF53244">
    <property type="entry name" value="MurD-like peptide ligases, peptide-binding domain"/>
    <property type="match status" value="1"/>
</dbReference>
<accession>B0B8Y4</accession>
<organism>
    <name type="scientific">Chlamydia trachomatis serovar L2 (strain ATCC VR-902B / DSM 19102 / 434/Bu)</name>
    <dbReference type="NCBI Taxonomy" id="471472"/>
    <lineage>
        <taxon>Bacteria</taxon>
        <taxon>Pseudomonadati</taxon>
        <taxon>Chlamydiota</taxon>
        <taxon>Chlamydiia</taxon>
        <taxon>Chlamydiales</taxon>
        <taxon>Chlamydiaceae</taxon>
        <taxon>Chlamydia/Chlamydophila group</taxon>
        <taxon>Chlamydia</taxon>
    </lineage>
</organism>
<keyword id="KW-0067">ATP-binding</keyword>
<keyword id="KW-0131">Cell cycle</keyword>
<keyword id="KW-0132">Cell division</keyword>
<keyword id="KW-0133">Cell shape</keyword>
<keyword id="KW-0961">Cell wall biogenesis/degradation</keyword>
<keyword id="KW-0963">Cytoplasm</keyword>
<keyword id="KW-0436">Ligase</keyword>
<keyword id="KW-0547">Nucleotide-binding</keyword>
<keyword id="KW-0573">Peptidoglycan synthesis</keyword>
<proteinExistence type="inferred from homology"/>
<gene>
    <name evidence="1" type="primary">murD</name>
    <name type="ordered locus">CTL0127</name>
</gene>